<accession>P43696</accession>
<protein>
    <recommendedName>
        <fullName>GATA-binding factor 5-B</fullName>
    </recommendedName>
    <alternativeName>
        <fullName>Transcription factor xGATA-5B</fullName>
    </alternativeName>
</protein>
<gene>
    <name type="primary">gata5-b</name>
    <name type="synonym">gata-4b</name>
    <name type="synonym">gata5b</name>
</gene>
<sequence>MYPSLALTANHAQPAYSHDTPNFLHSTGSPPVYVPTSRMPAMLQSLPYLQTCDTAHQGHHLANHPGWAQTANESHAFNASSPHTPSGFSYSHSPPVGNSSARDGGYQSPLIMGGSARDQYGNTLVRTGSYPSPYSYVGADMPPSWATGHFEGSMLHSLQGRQPLPGRISSLEFLEEFHGEGRECVNCGAMSTPLWRRDGTGHYLCNACGLYHKMNGINRPLIKPQKRLSSSRRAGLCCTNCHTSTTTLWRRNSEGEPVCNACGLYMKLHGVPRPLAMKKESIQTRKRKPKNIGKGKTSTGSSTSANNSPSSVTNTDPTPVLKTEPNITSHYPGQAIVPVSQGQSQTDDLVNGSHELKYIPEEYTYSPSALSQQSVPLRQESWCALALA</sequence>
<dbReference type="EMBL" id="L13702">
    <property type="protein sequence ID" value="AAA63687.1"/>
    <property type="molecule type" value="mRNA"/>
</dbReference>
<dbReference type="PIR" id="I51420">
    <property type="entry name" value="I51420"/>
</dbReference>
<dbReference type="RefSeq" id="NP_001079831.1">
    <property type="nucleotide sequence ID" value="NM_001086362.1"/>
</dbReference>
<dbReference type="SMR" id="P43696"/>
<dbReference type="DNASU" id="379521"/>
<dbReference type="GeneID" id="379521"/>
<dbReference type="KEGG" id="xla:379521"/>
<dbReference type="AGR" id="Xenbase:XB-GENE-6255488"/>
<dbReference type="CTD" id="379521"/>
<dbReference type="Xenbase" id="XB-GENE-6255488">
    <property type="gene designation" value="gata5.L"/>
</dbReference>
<dbReference type="OMA" id="VATSSWT"/>
<dbReference type="OrthoDB" id="515401at2759"/>
<dbReference type="Proteomes" id="UP000186698">
    <property type="component" value="Chromosome 9_10L"/>
</dbReference>
<dbReference type="Bgee" id="379521">
    <property type="expression patterns" value="Expressed in stomach and 16 other cell types or tissues"/>
</dbReference>
<dbReference type="GO" id="GO:0005634">
    <property type="term" value="C:nucleus"/>
    <property type="evidence" value="ECO:0000318"/>
    <property type="project" value="GO_Central"/>
</dbReference>
<dbReference type="GO" id="GO:0000981">
    <property type="term" value="F:DNA-binding transcription factor activity, RNA polymerase II-specific"/>
    <property type="evidence" value="ECO:0000318"/>
    <property type="project" value="GO_Central"/>
</dbReference>
<dbReference type="GO" id="GO:0000978">
    <property type="term" value="F:RNA polymerase II cis-regulatory region sequence-specific DNA binding"/>
    <property type="evidence" value="ECO:0000318"/>
    <property type="project" value="GO_Central"/>
</dbReference>
<dbReference type="GO" id="GO:0008270">
    <property type="term" value="F:zinc ion binding"/>
    <property type="evidence" value="ECO:0007669"/>
    <property type="project" value="UniProtKB-KW"/>
</dbReference>
<dbReference type="GO" id="GO:0048738">
    <property type="term" value="P:cardiac muscle tissue development"/>
    <property type="evidence" value="ECO:0000318"/>
    <property type="project" value="GO_Central"/>
</dbReference>
<dbReference type="GO" id="GO:0045165">
    <property type="term" value="P:cell fate commitment"/>
    <property type="evidence" value="ECO:0000318"/>
    <property type="project" value="GO_Central"/>
</dbReference>
<dbReference type="GO" id="GO:0000122">
    <property type="term" value="P:negative regulation of transcription by RNA polymerase II"/>
    <property type="evidence" value="ECO:0000318"/>
    <property type="project" value="GO_Central"/>
</dbReference>
<dbReference type="GO" id="GO:0045944">
    <property type="term" value="P:positive regulation of transcription by RNA polymerase II"/>
    <property type="evidence" value="ECO:0000318"/>
    <property type="project" value="GO_Central"/>
</dbReference>
<dbReference type="CDD" id="cd00202">
    <property type="entry name" value="ZnF_GATA"/>
    <property type="match status" value="2"/>
</dbReference>
<dbReference type="FunFam" id="3.30.50.10:FF:000001">
    <property type="entry name" value="GATA transcription factor (GATAd)"/>
    <property type="match status" value="1"/>
</dbReference>
<dbReference type="FunFam" id="3.30.50.10:FF:000032">
    <property type="entry name" value="Transcription factor GATA-3"/>
    <property type="match status" value="1"/>
</dbReference>
<dbReference type="Gene3D" id="3.30.50.10">
    <property type="entry name" value="Erythroid Transcription Factor GATA-1, subunit A"/>
    <property type="match status" value="2"/>
</dbReference>
<dbReference type="InterPro" id="IPR008013">
    <property type="entry name" value="GATA_N"/>
</dbReference>
<dbReference type="InterPro" id="IPR016375">
    <property type="entry name" value="TF_GATA_4/5/6"/>
</dbReference>
<dbReference type="InterPro" id="IPR039355">
    <property type="entry name" value="Transcription_factor_GATA"/>
</dbReference>
<dbReference type="InterPro" id="IPR000679">
    <property type="entry name" value="Znf_GATA"/>
</dbReference>
<dbReference type="InterPro" id="IPR013088">
    <property type="entry name" value="Znf_NHR/GATA"/>
</dbReference>
<dbReference type="PANTHER" id="PTHR10071">
    <property type="entry name" value="TRANSCRIPTION FACTOR GATA FAMILY MEMBER"/>
    <property type="match status" value="1"/>
</dbReference>
<dbReference type="PANTHER" id="PTHR10071:SF289">
    <property type="entry name" value="TRANSCRIPTION FACTOR GATA-5"/>
    <property type="match status" value="1"/>
</dbReference>
<dbReference type="Pfam" id="PF00320">
    <property type="entry name" value="GATA"/>
    <property type="match status" value="2"/>
</dbReference>
<dbReference type="Pfam" id="PF05349">
    <property type="entry name" value="GATA-N"/>
    <property type="match status" value="1"/>
</dbReference>
<dbReference type="PIRSF" id="PIRSF003028">
    <property type="entry name" value="TF_GATA_4/5/6"/>
    <property type="match status" value="1"/>
</dbReference>
<dbReference type="PRINTS" id="PR00619">
    <property type="entry name" value="GATAZNFINGER"/>
</dbReference>
<dbReference type="SMART" id="SM00401">
    <property type="entry name" value="ZnF_GATA"/>
    <property type="match status" value="2"/>
</dbReference>
<dbReference type="SUPFAM" id="SSF57716">
    <property type="entry name" value="Glucocorticoid receptor-like (DNA-binding domain)"/>
    <property type="match status" value="2"/>
</dbReference>
<dbReference type="PROSITE" id="PS00344">
    <property type="entry name" value="GATA_ZN_FINGER_1"/>
    <property type="match status" value="2"/>
</dbReference>
<dbReference type="PROSITE" id="PS50114">
    <property type="entry name" value="GATA_ZN_FINGER_2"/>
    <property type="match status" value="2"/>
</dbReference>
<keyword id="KW-0010">Activator</keyword>
<keyword id="KW-0238">DNA-binding</keyword>
<keyword id="KW-0479">Metal-binding</keyword>
<keyword id="KW-0539">Nucleus</keyword>
<keyword id="KW-1185">Reference proteome</keyword>
<keyword id="KW-0677">Repeat</keyword>
<keyword id="KW-0804">Transcription</keyword>
<keyword id="KW-0805">Transcription regulation</keyword>
<keyword id="KW-0862">Zinc</keyword>
<keyword id="KW-0863">Zinc-finger</keyword>
<evidence type="ECO:0000255" key="1">
    <source>
        <dbReference type="PROSITE-ProRule" id="PRU00094"/>
    </source>
</evidence>
<evidence type="ECO:0000256" key="2">
    <source>
        <dbReference type="SAM" id="MobiDB-lite"/>
    </source>
</evidence>
<name>GAT5B_XENLA</name>
<proteinExistence type="evidence at transcript level"/>
<reference key="1">
    <citation type="journal article" date="1993" name="Development">
        <title>GATA-4 is a novel transcription factor expressed in endocardium of the developing heart.</title>
        <authorList>
            <person name="Kelley C."/>
            <person name="Blumberg H."/>
            <person name="Zon L.I."/>
            <person name="Evans T."/>
        </authorList>
    </citation>
    <scope>NUCLEOTIDE SEQUENCE [MRNA]</scope>
</reference>
<reference key="2">
    <citation type="journal article" date="1994" name="J. Biol. Chem.">
        <title>GATA-4/5/6, a subfamily of three transcription factors transcribed in developing heart and gut.</title>
        <authorList>
            <person name="Laverriere A.C."/>
            <person name="Macneill C."/>
            <person name="Mueller C."/>
            <person name="Poelmann R.E."/>
            <person name="Burch J.B.E."/>
            <person name="Evans T."/>
        </authorList>
    </citation>
    <scope>RENAME XGATA-4 TO XGATA-5</scope>
</reference>
<feature type="chain" id="PRO_0000083422" description="GATA-binding factor 5-B">
    <location>
        <begin position="1"/>
        <end position="388"/>
    </location>
</feature>
<feature type="zinc finger region" description="GATA-type 1" evidence="1">
    <location>
        <begin position="184"/>
        <end position="208"/>
    </location>
</feature>
<feature type="zinc finger region" description="GATA-type 2" evidence="1">
    <location>
        <begin position="238"/>
        <end position="262"/>
    </location>
</feature>
<feature type="region of interest" description="Disordered" evidence="2">
    <location>
        <begin position="76"/>
        <end position="113"/>
    </location>
</feature>
<feature type="region of interest" description="Disordered" evidence="2">
    <location>
        <begin position="280"/>
        <end position="333"/>
    </location>
</feature>
<feature type="compositionally biased region" description="Polar residues" evidence="2">
    <location>
        <begin position="76"/>
        <end position="101"/>
    </location>
</feature>
<feature type="compositionally biased region" description="Basic residues" evidence="2">
    <location>
        <begin position="284"/>
        <end position="293"/>
    </location>
</feature>
<feature type="compositionally biased region" description="Low complexity" evidence="2">
    <location>
        <begin position="297"/>
        <end position="315"/>
    </location>
</feature>
<organism>
    <name type="scientific">Xenopus laevis</name>
    <name type="common">African clawed frog</name>
    <dbReference type="NCBI Taxonomy" id="8355"/>
    <lineage>
        <taxon>Eukaryota</taxon>
        <taxon>Metazoa</taxon>
        <taxon>Chordata</taxon>
        <taxon>Craniata</taxon>
        <taxon>Vertebrata</taxon>
        <taxon>Euteleostomi</taxon>
        <taxon>Amphibia</taxon>
        <taxon>Batrachia</taxon>
        <taxon>Anura</taxon>
        <taxon>Pipoidea</taxon>
        <taxon>Pipidae</taxon>
        <taxon>Xenopodinae</taxon>
        <taxon>Xenopus</taxon>
        <taxon>Xenopus</taxon>
    </lineage>
</organism>
<comment type="subcellular location">
    <subcellularLocation>
        <location>Nucleus</location>
    </subcellularLocation>
</comment>
<comment type="tissue specificity">
    <text>Highly expressed in heart and throughout the gut, with lower levels detected in lung, gonads, liver, and gall bladder.</text>
</comment>
<comment type="developmental stage">
    <text>In presumptive cardiac ventral mesoderm at the time that bilateral progenitors fuse and form the cardiac tube. By stage 30, expressed in the developing atria and ventricles; at stage 38, in endocardial layer. By stage 40, detected in the great vessels.</text>
</comment>